<keyword id="KW-0168">Coated pit</keyword>
<keyword id="KW-0968">Cytoplasmic vesicle</keyword>
<keyword id="KW-0472">Membrane</keyword>
<keyword id="KW-1185">Reference proteome</keyword>
<keyword id="KW-0677">Repeat</keyword>
<proteinExistence type="inferred from homology"/>
<organism>
    <name type="scientific">Oryza sativa subsp. japonica</name>
    <name type="common">Rice</name>
    <dbReference type="NCBI Taxonomy" id="39947"/>
    <lineage>
        <taxon>Eukaryota</taxon>
        <taxon>Viridiplantae</taxon>
        <taxon>Streptophyta</taxon>
        <taxon>Embryophyta</taxon>
        <taxon>Tracheophyta</taxon>
        <taxon>Spermatophyta</taxon>
        <taxon>Magnoliopsida</taxon>
        <taxon>Liliopsida</taxon>
        <taxon>Poales</taxon>
        <taxon>Poaceae</taxon>
        <taxon>BOP clade</taxon>
        <taxon>Oryzoideae</taxon>
        <taxon>Oryzeae</taxon>
        <taxon>Oryzinae</taxon>
        <taxon>Oryza</taxon>
        <taxon>Oryza sativa</taxon>
    </lineage>
</organism>
<reference key="1">
    <citation type="journal article" date="2005" name="BMC Biol.">
        <title>The sequence of rice chromosomes 11 and 12, rich in disease resistance genes and recent gene duplications.</title>
        <authorList>
            <consortium name="The rice chromosomes 11 and 12 sequencing consortia"/>
        </authorList>
    </citation>
    <scope>NUCLEOTIDE SEQUENCE [LARGE SCALE GENOMIC DNA]</scope>
    <source>
        <strain>cv. Nipponbare</strain>
    </source>
</reference>
<reference key="2">
    <citation type="journal article" date="2005" name="Nature">
        <title>The map-based sequence of the rice genome.</title>
        <authorList>
            <consortium name="International rice genome sequencing project (IRGSP)"/>
        </authorList>
    </citation>
    <scope>NUCLEOTIDE SEQUENCE [LARGE SCALE GENOMIC DNA]</scope>
    <source>
        <strain>cv. Nipponbare</strain>
    </source>
</reference>
<reference key="3">
    <citation type="journal article" date="2008" name="Nucleic Acids Res.">
        <title>The rice annotation project database (RAP-DB): 2008 update.</title>
        <authorList>
            <consortium name="The rice annotation project (RAP)"/>
        </authorList>
    </citation>
    <scope>GENOME REANNOTATION</scope>
    <source>
        <strain>cv. Nipponbare</strain>
    </source>
</reference>
<reference key="4">
    <citation type="journal article" date="2013" name="Rice">
        <title>Improvement of the Oryza sativa Nipponbare reference genome using next generation sequence and optical map data.</title>
        <authorList>
            <person name="Kawahara Y."/>
            <person name="de la Bastide M."/>
            <person name="Hamilton J.P."/>
            <person name="Kanamori H."/>
            <person name="McCombie W.R."/>
            <person name="Ouyang S."/>
            <person name="Schwartz D.C."/>
            <person name="Tanaka T."/>
            <person name="Wu J."/>
            <person name="Zhou S."/>
            <person name="Childs K.L."/>
            <person name="Davidson R.M."/>
            <person name="Lin H."/>
            <person name="Quesada-Ocampo L."/>
            <person name="Vaillancourt B."/>
            <person name="Sakai H."/>
            <person name="Lee S.S."/>
            <person name="Kim J."/>
            <person name="Numa H."/>
            <person name="Itoh T."/>
            <person name="Buell C.R."/>
            <person name="Matsumoto T."/>
        </authorList>
    </citation>
    <scope>GENOME REANNOTATION</scope>
    <source>
        <strain>cv. Nipponbare</strain>
    </source>
</reference>
<accession>Q2RBN7</accession>
<gene>
    <name type="ordered locus">Os11g0104900</name>
    <name type="ordered locus">LOC_Os11g01380</name>
</gene>
<dbReference type="EMBL" id="DP000010">
    <property type="protein sequence ID" value="ABA91061.1"/>
    <property type="molecule type" value="Genomic_DNA"/>
</dbReference>
<dbReference type="EMBL" id="AP008217">
    <property type="status" value="NOT_ANNOTATED_CDS"/>
    <property type="molecule type" value="Genomic_DNA"/>
</dbReference>
<dbReference type="EMBL" id="AP014967">
    <property type="status" value="NOT_ANNOTATED_CDS"/>
    <property type="molecule type" value="Genomic_DNA"/>
</dbReference>
<dbReference type="SMR" id="Q2RBN7"/>
<dbReference type="FunCoup" id="Q2RBN7">
    <property type="interactions" value="3665"/>
</dbReference>
<dbReference type="STRING" id="39947.Q2RBN7"/>
<dbReference type="PaxDb" id="39947-Q2RBN7"/>
<dbReference type="EnsemblPlants" id="Os11t0104900-01">
    <property type="protein sequence ID" value="Os11t0104900-01"/>
    <property type="gene ID" value="Os11g0104900"/>
</dbReference>
<dbReference type="Gramene" id="Os11t0104900-01">
    <property type="protein sequence ID" value="Os11t0104900-01"/>
    <property type="gene ID" value="Os11g0104900"/>
</dbReference>
<dbReference type="KEGG" id="osa:4349546"/>
<dbReference type="eggNOG" id="KOG0985">
    <property type="taxonomic scope" value="Eukaryota"/>
</dbReference>
<dbReference type="HOGENOM" id="CLU_002136_1_0_1"/>
<dbReference type="InParanoid" id="Q2RBN7"/>
<dbReference type="OrthoDB" id="1853790at2759"/>
<dbReference type="Proteomes" id="UP000000763">
    <property type="component" value="Chromosome 11"/>
</dbReference>
<dbReference type="Proteomes" id="UP000059680">
    <property type="component" value="Chromosome 11"/>
</dbReference>
<dbReference type="GO" id="GO:0030132">
    <property type="term" value="C:clathrin coat of coated pit"/>
    <property type="evidence" value="ECO:0007669"/>
    <property type="project" value="InterPro"/>
</dbReference>
<dbReference type="GO" id="GO:0030130">
    <property type="term" value="C:clathrin coat of trans-Golgi network vesicle"/>
    <property type="evidence" value="ECO:0007669"/>
    <property type="project" value="InterPro"/>
</dbReference>
<dbReference type="GO" id="GO:0071439">
    <property type="term" value="C:clathrin complex"/>
    <property type="evidence" value="ECO:0000318"/>
    <property type="project" value="GO_Central"/>
</dbReference>
<dbReference type="GO" id="GO:0032051">
    <property type="term" value="F:clathrin light chain binding"/>
    <property type="evidence" value="ECO:0000318"/>
    <property type="project" value="GO_Central"/>
</dbReference>
<dbReference type="GO" id="GO:0005198">
    <property type="term" value="F:structural molecule activity"/>
    <property type="evidence" value="ECO:0007669"/>
    <property type="project" value="InterPro"/>
</dbReference>
<dbReference type="GO" id="GO:0006886">
    <property type="term" value="P:intracellular protein transport"/>
    <property type="evidence" value="ECO:0007669"/>
    <property type="project" value="InterPro"/>
</dbReference>
<dbReference type="GO" id="GO:0006898">
    <property type="term" value="P:receptor-mediated endocytosis"/>
    <property type="evidence" value="ECO:0000318"/>
    <property type="project" value="GO_Central"/>
</dbReference>
<dbReference type="FunFam" id="1.25.40.10:FF:000001">
    <property type="entry name" value="Clathrin heavy chain"/>
    <property type="match status" value="1"/>
</dbReference>
<dbReference type="FunFam" id="1.25.40.10:FF:000002">
    <property type="entry name" value="Clathrin heavy chain"/>
    <property type="match status" value="1"/>
</dbReference>
<dbReference type="FunFam" id="1.25.40.10:FF:000005">
    <property type="entry name" value="Clathrin heavy chain"/>
    <property type="match status" value="1"/>
</dbReference>
<dbReference type="FunFam" id="1.25.40.10:FF:000686">
    <property type="entry name" value="Clathrin heavy chain"/>
    <property type="match status" value="1"/>
</dbReference>
<dbReference type="FunFam" id="1.25.40.730:FF:000002">
    <property type="entry name" value="Clathrin heavy chain"/>
    <property type="match status" value="1"/>
</dbReference>
<dbReference type="FunFam" id="2.130.10.110:FF:000002">
    <property type="entry name" value="Clathrin heavy chain"/>
    <property type="match status" value="1"/>
</dbReference>
<dbReference type="Gene3D" id="1.25.40.730">
    <property type="match status" value="1"/>
</dbReference>
<dbReference type="Gene3D" id="2.130.10.110">
    <property type="entry name" value="Clathrin heavy-chain terminal domain"/>
    <property type="match status" value="1"/>
</dbReference>
<dbReference type="Gene3D" id="1.25.40.10">
    <property type="entry name" value="Tetratricopeptide repeat domain"/>
    <property type="match status" value="3"/>
</dbReference>
<dbReference type="InterPro" id="IPR016024">
    <property type="entry name" value="ARM-type_fold"/>
</dbReference>
<dbReference type="InterPro" id="IPR055358">
    <property type="entry name" value="CHCR"/>
</dbReference>
<dbReference type="InterPro" id="IPR000547">
    <property type="entry name" value="Clathrin_H-chain/VPS_repeat"/>
</dbReference>
<dbReference type="InterPro" id="IPR015348">
    <property type="entry name" value="Clathrin_H-chain_linker_core"/>
</dbReference>
<dbReference type="InterPro" id="IPR016025">
    <property type="entry name" value="Clathrin_H-chain_N"/>
</dbReference>
<dbReference type="InterPro" id="IPR022365">
    <property type="entry name" value="Clathrin_H-chain_propeller_rpt"/>
</dbReference>
<dbReference type="InterPro" id="IPR016341">
    <property type="entry name" value="Clathrin_heavy_chain"/>
</dbReference>
<dbReference type="InterPro" id="IPR011990">
    <property type="entry name" value="TPR-like_helical_dom_sf"/>
</dbReference>
<dbReference type="PANTHER" id="PTHR10292:SF1">
    <property type="entry name" value="CLATHRIN HEAVY CHAIN"/>
    <property type="match status" value="1"/>
</dbReference>
<dbReference type="PANTHER" id="PTHR10292">
    <property type="entry name" value="CLATHRIN HEAVY CHAIN RELATED"/>
    <property type="match status" value="1"/>
</dbReference>
<dbReference type="Pfam" id="PF00637">
    <property type="entry name" value="Clathrin"/>
    <property type="match status" value="7"/>
</dbReference>
<dbReference type="Pfam" id="PF09268">
    <property type="entry name" value="Clathrin-link"/>
    <property type="match status" value="1"/>
</dbReference>
<dbReference type="Pfam" id="PF13838">
    <property type="entry name" value="Clathrin_H_link"/>
    <property type="match status" value="1"/>
</dbReference>
<dbReference type="Pfam" id="PF01394">
    <property type="entry name" value="Clathrin_propel"/>
    <property type="match status" value="2"/>
</dbReference>
<dbReference type="PIRSF" id="PIRSF002290">
    <property type="entry name" value="Clathrin_H_chain"/>
    <property type="match status" value="1"/>
</dbReference>
<dbReference type="SMART" id="SM00299">
    <property type="entry name" value="CLH"/>
    <property type="match status" value="7"/>
</dbReference>
<dbReference type="SUPFAM" id="SSF48371">
    <property type="entry name" value="ARM repeat"/>
    <property type="match status" value="5"/>
</dbReference>
<dbReference type="SUPFAM" id="SSF50989">
    <property type="entry name" value="Clathrin heavy-chain terminal domain"/>
    <property type="match status" value="1"/>
</dbReference>
<dbReference type="PROSITE" id="PS50236">
    <property type="entry name" value="CHCR"/>
    <property type="match status" value="7"/>
</dbReference>
<name>CLH1_ORYSJ</name>
<feature type="chain" id="PRO_0000414015" description="Clathrin heavy chain 1">
    <location>
        <begin position="1"/>
        <end position="1708"/>
    </location>
</feature>
<feature type="repeat" description="CHCR 1">
    <location>
        <begin position="551"/>
        <end position="697"/>
    </location>
</feature>
<feature type="repeat" description="CHCR 2">
    <location>
        <begin position="700"/>
        <end position="842"/>
    </location>
</feature>
<feature type="repeat" description="CHCR 3">
    <location>
        <begin position="847"/>
        <end position="986"/>
    </location>
</feature>
<feature type="repeat" description="CHCR 4">
    <location>
        <begin position="993"/>
        <end position="1138"/>
    </location>
</feature>
<feature type="repeat" description="CHCR 5">
    <location>
        <begin position="1142"/>
        <end position="1283"/>
    </location>
</feature>
<feature type="repeat" description="CHCR 6">
    <location>
        <begin position="1288"/>
        <end position="1434"/>
    </location>
</feature>
<feature type="repeat" description="CHCR 7">
    <location>
        <begin position="1437"/>
        <end position="1580"/>
    </location>
</feature>
<feature type="region of interest" description="Globular terminal domain" evidence="1">
    <location>
        <begin position="1"/>
        <end position="492"/>
    </location>
</feature>
<feature type="region of interest" description="WD40-like repeat 1">
    <location>
        <begin position="25"/>
        <end position="67"/>
    </location>
</feature>
<feature type="region of interest" description="WD40-like repeat 2">
    <location>
        <begin position="68"/>
        <end position="113"/>
    </location>
</feature>
<feature type="region of interest" description="WD40-like repeat 3">
    <location>
        <begin position="114"/>
        <end position="155"/>
    </location>
</feature>
<feature type="region of interest" description="WD40-like repeat 4">
    <location>
        <begin position="156"/>
        <end position="205"/>
    </location>
</feature>
<feature type="region of interest" description="WD40-like repeat 5">
    <location>
        <begin position="206"/>
        <end position="270"/>
    </location>
</feature>
<feature type="region of interest" description="WD40-like repeat 6">
    <location>
        <begin position="271"/>
        <end position="314"/>
    </location>
</feature>
<feature type="region of interest" description="WD40-like repeat 7">
    <location>
        <begin position="315"/>
        <end position="343"/>
    </location>
</feature>
<feature type="region of interest" description="Binding site for the uncoating ATPase, involved in lattice disassembly" evidence="1">
    <location>
        <begin position="462"/>
        <end position="478"/>
    </location>
</feature>
<feature type="region of interest" description="Flexible linker" evidence="1">
    <location>
        <begin position="493"/>
        <end position="536"/>
    </location>
</feature>
<feature type="region of interest" description="Heavy chain arm" evidence="1">
    <location>
        <begin position="537"/>
        <end position="1708"/>
    </location>
</feature>
<feature type="region of interest" description="Distal segment" evidence="1">
    <location>
        <begin position="537"/>
        <end position="648"/>
    </location>
</feature>
<feature type="region of interest" description="Proximal segment" evidence="1">
    <location>
        <begin position="653"/>
        <end position="1708"/>
    </location>
</feature>
<feature type="region of interest" description="Involved in binding clathrin light chain" evidence="1">
    <location>
        <begin position="1227"/>
        <end position="1536"/>
    </location>
</feature>
<feature type="region of interest" description="Trimerization" evidence="1">
    <location>
        <begin position="1564"/>
        <end position="1708"/>
    </location>
</feature>
<protein>
    <recommendedName>
        <fullName>Clathrin heavy chain 1</fullName>
    </recommendedName>
</protein>
<comment type="function">
    <text>Clathrin is the major protein of the polyhedral coat of coated pits and vesicles.</text>
</comment>
<comment type="subunit">
    <text evidence="1">Clathrin triskelions, composed of 3 heavy chains and 3 light chains, are the basic subunits of the clathrin coat.</text>
</comment>
<comment type="subcellular location">
    <subcellularLocation>
        <location evidence="1">Cytoplasmic vesicle membrane</location>
        <topology evidence="1">Peripheral membrane protein</topology>
        <orientation evidence="1">Cytoplasmic side</orientation>
    </subcellularLocation>
    <subcellularLocation>
        <location evidence="1">Membrane</location>
        <location evidence="1">Coated pit</location>
        <topology evidence="1">Peripheral membrane protein</topology>
        <orientation evidence="1">Cytoplasmic side</orientation>
    </subcellularLocation>
    <text evidence="1">Cytoplasmic face of coated pits and vesicles.</text>
</comment>
<comment type="domain">
    <text>The C-terminal third of the heavy chains forms the hub of the triskelion. This region contains the trimerization domain and the light-chain binding domain involved in the assembly of the clathrin lattice.</text>
</comment>
<comment type="domain">
    <text evidence="1">The N-terminal seven-bladed beta-propeller is formed by WD40-like repeats, and projects inward from the polyhedral outer clathrin coat. It constitutes a major protein-protein interaction node (By similarity).</text>
</comment>
<comment type="similarity">
    <text evidence="2">Belongs to the clathrin heavy chain family.</text>
</comment>
<sequence>MAAANAPIAMREALTLTSLGIAPQFVTFTHVTMESEKYICVRETSPQNSVVIVDMAMPAQPLRRPITADSALMNPNTRILALKAQIPGTTQDHLQIFNIEAKTKIKSHQMPEQVVFWKWITPKLLGLVTQTSVYHWSIEGDSEPAKMFDRTANLANNQIINYRCDPSEKWLVLIGIAPGAPERPQLVKGNMQLFSVDQQRSQALEAHAASFASFKVVGNENPSTLICFASKTTNAGQITSKLHVIELGAQPGKPGFSKKQADLFFPPDFQDDFPVAMQISQKYGLIYVITKLGLLFVYDLETAAAVYRNRISPDPIFLTAESSASGGFYAINRRGQVLHATVNDATIVPFVSSQLNNLELAVNLAKRANLPGAENLVVQRFQELFAQTKYKEAAELAAESPQGLLRTPETVAKFQSVPVQAGQTPPLLQYFGTLLTRGKLNAYESLELSRLVVNQNKKNLLENWLAEDKLECSEELGDLVKTVDNDLALKIYIKARATPKVVAAFAERREFDKILIYSKQVGYTPDYLFLLQTILRTDPQGAVNFALMMSQMEGGCPVDYNTITDLFLQRNMIREATAFLLDVLKPNLPEHAFLQTKVLEINLVTYPNVADAILANGMFSHYDRPRVAQLCEKAGLYLRALQHYTELPDIKRVMVNTHAIEPQALVEFFGTLSREWALECMKDLLLVNLRGNLQIVVQAAKEYSEQLGVDACIKLFEQFKSYEGLYFFLGAYLSSSEDPDIHFKYIEAAARTGQIKEVERVTRESNFYDAEKTKNFLMEAKLPDARPLINVCDRFGFVPDLTHYLYTNNMLRYIEGYVQKVNPGNAPLVVGQLLDDECPEDFIKGLILSVRSLLPVEPLVDECEKRNRLRLLTQFLEHLVSEGSQDVHVHNALGKIIIDSNNNPEHFLTTNPFYDSRVVGKYCEKRDPTLAVVAYRRGQCDDELINVTNKNSLFKLQARYVVERMDGDLWDKVLQPENEYRRQLIDQVVSTALPESKSPEQVSAAVKAFMTADLPHELIELLEKIVLQNSAFSGNFNLQNLLILTAIKADPSRVMDYVNRLDNFDGPAVGEVAVEAQLFEEAFAIFKKFNLNVQAVNVLLDNIRSIERAEEFAFRVEEDAVWSQVAKAQLREGLVSEAIESFIRADDATHFLDVIRAAEEANVYDDLVKYLLMVRQKAREPKVDGELIFAYAKIDRLSDIEEFILMPNVANLQNVGDRLYDEELYEAAKIIYAFISNWAKLAVTLVKLKQFQGAVDAARKANSAKTWKEVCFACVDAEEFRLAQICGLNIIVQVDDLEEVSEYYQNRGCFNELISLMESGLGLERAHMGIFTELGVLYARYRPEKLMEHIKLFSTRLNIPKLIRACDEQQHWKELTYLYIQYDEFDNAATTIMNHSPDAWDHMQFKDVAVKVANVELYYKAVHFYLQEHPDLINDLLNVLALRLDHTRVVDIMRKAGQLHLVKPYMVAVQSNNVSAVNEALNELYVEEEDYERLRESVDMHDNFDQIGLAQKLEKHELLEMRRIAAYIYKKAGRWKQSIALSKKDNMYKDCMETCSQSGDRELSEDLLVYFIEQGKKECFASCLFICYDLIRADVALELAWMNNMVDFAFPYLLQFIREYTSKVDELVKDRIESQNEVRAKEKEEKDLVAQQNMYAQLLPLALPAPPGMGGPPPPMGMPGMPPMGGMGMPPMGPGPMPAYGMPPMGSY</sequence>
<evidence type="ECO:0000250" key="1"/>
<evidence type="ECO:0000305" key="2"/>